<proteinExistence type="evidence at protein level"/>
<sequence length="11" mass="1142">QPPGGSKVILF</sequence>
<name>MORN_HYDVU</name>
<reference key="1">
    <citation type="journal article" date="1981" name="Proc. Natl. Acad. Sci. U.S.A.">
        <title>Isolation and amino acid sequence of a morphogenetic peptide from hydra.</title>
        <authorList>
            <person name="Schaller H.C."/>
            <person name="Bodenmuller H."/>
        </authorList>
    </citation>
    <scope>PROTEIN SEQUENCE</scope>
    <scope>PYROGLUTAMATE FORMATION AT GLN-1</scope>
</reference>
<reference key="2">
    <citation type="journal article" date="1981" name="FEBS Lett.">
        <title>Synthesis of a new neuropeptide, the head activator from hydra.</title>
        <authorList>
            <person name="Birr C."/>
            <person name="Zachmann B."/>
            <person name="Bodenmuller H."/>
            <person name="Schaller H.C."/>
        </authorList>
    </citation>
    <scope>SYNTHESIS</scope>
</reference>
<comment type="function">
    <text evidence="1">HA acts as an autocrine growth factor for neural cells in the G2/mitosis transition.</text>
</comment>
<comment type="caution">
    <text evidence="3">This peptide was first isolated from nerve cells of hydra and was called head activator by the authors, because it induced head-specific growth and differentiation in this animal. It has been found in mammalian intestine and hypothalamus.</text>
</comment>
<feature type="peptide" id="PRO_0000044168" description="Morphogenetic neuropeptide">
    <location>
        <begin position="1"/>
        <end position="11"/>
    </location>
</feature>
<feature type="modified residue" description="Pyrrolidone carboxylic acid" evidence="2">
    <location>
        <position position="1"/>
    </location>
</feature>
<accession>P69251</accession>
<accession>P01163</accession>
<dbReference type="PIR" id="B93900">
    <property type="entry name" value="YHJFHY"/>
</dbReference>
<dbReference type="Proteomes" id="UP000694840">
    <property type="component" value="Unplaced"/>
</dbReference>
<dbReference type="GO" id="GO:0005737">
    <property type="term" value="C:cytoplasm"/>
    <property type="evidence" value="ECO:0000314"/>
    <property type="project" value="UniProtKB"/>
</dbReference>
<dbReference type="GO" id="GO:0001664">
    <property type="term" value="F:G protein-coupled receptor binding"/>
    <property type="evidence" value="ECO:0000353"/>
    <property type="project" value="UniProtKB"/>
</dbReference>
<dbReference type="GO" id="GO:0008083">
    <property type="term" value="F:growth factor activity"/>
    <property type="evidence" value="ECO:0007669"/>
    <property type="project" value="UniProtKB-KW"/>
</dbReference>
<dbReference type="GO" id="GO:0048018">
    <property type="term" value="F:receptor ligand activity"/>
    <property type="evidence" value="ECO:0000314"/>
    <property type="project" value="UniProtKB"/>
</dbReference>
<dbReference type="GO" id="GO:0051301">
    <property type="term" value="P:cell division"/>
    <property type="evidence" value="ECO:0007669"/>
    <property type="project" value="UniProtKB-KW"/>
</dbReference>
<dbReference type="GO" id="GO:0002031">
    <property type="term" value="P:G protein-coupled receptor internalization"/>
    <property type="evidence" value="ECO:0000314"/>
    <property type="project" value="UniProtKB"/>
</dbReference>
<dbReference type="GO" id="GO:0007218">
    <property type="term" value="P:neuropeptide signaling pathway"/>
    <property type="evidence" value="ECO:0000314"/>
    <property type="project" value="UniProtKB"/>
</dbReference>
<dbReference type="GO" id="GO:0090068">
    <property type="term" value="P:positive regulation of cell cycle process"/>
    <property type="evidence" value="ECO:0000314"/>
    <property type="project" value="UniProtKB"/>
</dbReference>
<evidence type="ECO:0000250" key="1"/>
<evidence type="ECO:0000269" key="2">
    <source>
    </source>
</evidence>
<evidence type="ECO:0000305" key="3"/>
<keyword id="KW-0131">Cell cycle</keyword>
<keyword id="KW-0132">Cell division</keyword>
<keyword id="KW-0903">Direct protein sequencing</keyword>
<keyword id="KW-0339">Growth factor</keyword>
<keyword id="KW-0498">Mitosis</keyword>
<keyword id="KW-0873">Pyrrolidone carboxylic acid</keyword>
<keyword id="KW-1185">Reference proteome</keyword>
<organism>
    <name type="scientific">Hydra vulgaris</name>
    <name type="common">Hydra</name>
    <name type="synonym">Hydra attenuata</name>
    <dbReference type="NCBI Taxonomy" id="6087"/>
    <lineage>
        <taxon>Eukaryota</taxon>
        <taxon>Metazoa</taxon>
        <taxon>Cnidaria</taxon>
        <taxon>Hydrozoa</taxon>
        <taxon>Hydroidolina</taxon>
        <taxon>Anthoathecata</taxon>
        <taxon>Aplanulata</taxon>
        <taxon>Hydridae</taxon>
        <taxon>Hydra</taxon>
    </lineage>
</organism>
<protein>
    <recommendedName>
        <fullName>Morphogenetic neuropeptide</fullName>
    </recommendedName>
    <alternativeName>
        <fullName>Head activator</fullName>
        <shortName>HA</shortName>
    </alternativeName>
</protein>